<accession>A1VS84</accession>
<dbReference type="EMBL" id="CP000529">
    <property type="protein sequence ID" value="ABM38512.1"/>
    <property type="molecule type" value="Genomic_DNA"/>
</dbReference>
<dbReference type="RefSeq" id="WP_011802583.1">
    <property type="nucleotide sequence ID" value="NC_008781.1"/>
</dbReference>
<dbReference type="SMR" id="A1VS84"/>
<dbReference type="STRING" id="365044.Pnap_3214"/>
<dbReference type="KEGG" id="pna:Pnap_3214"/>
<dbReference type="eggNOG" id="COG0227">
    <property type="taxonomic scope" value="Bacteria"/>
</dbReference>
<dbReference type="HOGENOM" id="CLU_064548_3_1_4"/>
<dbReference type="OrthoDB" id="9805609at2"/>
<dbReference type="Proteomes" id="UP000000644">
    <property type="component" value="Chromosome"/>
</dbReference>
<dbReference type="GO" id="GO:0022625">
    <property type="term" value="C:cytosolic large ribosomal subunit"/>
    <property type="evidence" value="ECO:0007669"/>
    <property type="project" value="TreeGrafter"/>
</dbReference>
<dbReference type="GO" id="GO:0003735">
    <property type="term" value="F:structural constituent of ribosome"/>
    <property type="evidence" value="ECO:0007669"/>
    <property type="project" value="InterPro"/>
</dbReference>
<dbReference type="GO" id="GO:0006412">
    <property type="term" value="P:translation"/>
    <property type="evidence" value="ECO:0007669"/>
    <property type="project" value="UniProtKB-UniRule"/>
</dbReference>
<dbReference type="FunFam" id="2.30.170.40:FF:000001">
    <property type="entry name" value="50S ribosomal protein L28"/>
    <property type="match status" value="1"/>
</dbReference>
<dbReference type="Gene3D" id="2.30.170.40">
    <property type="entry name" value="Ribosomal protein L28/L24"/>
    <property type="match status" value="1"/>
</dbReference>
<dbReference type="HAMAP" id="MF_00373">
    <property type="entry name" value="Ribosomal_bL28"/>
    <property type="match status" value="1"/>
</dbReference>
<dbReference type="InterPro" id="IPR026569">
    <property type="entry name" value="Ribosomal_bL28"/>
</dbReference>
<dbReference type="InterPro" id="IPR034704">
    <property type="entry name" value="Ribosomal_bL28/bL31-like_sf"/>
</dbReference>
<dbReference type="InterPro" id="IPR001383">
    <property type="entry name" value="Ribosomal_bL28_bact-type"/>
</dbReference>
<dbReference type="InterPro" id="IPR037147">
    <property type="entry name" value="Ribosomal_bL28_sf"/>
</dbReference>
<dbReference type="NCBIfam" id="TIGR00009">
    <property type="entry name" value="L28"/>
    <property type="match status" value="1"/>
</dbReference>
<dbReference type="PANTHER" id="PTHR13528">
    <property type="entry name" value="39S RIBOSOMAL PROTEIN L28, MITOCHONDRIAL"/>
    <property type="match status" value="1"/>
</dbReference>
<dbReference type="PANTHER" id="PTHR13528:SF2">
    <property type="entry name" value="LARGE RIBOSOMAL SUBUNIT PROTEIN BL28M"/>
    <property type="match status" value="1"/>
</dbReference>
<dbReference type="Pfam" id="PF00830">
    <property type="entry name" value="Ribosomal_L28"/>
    <property type="match status" value="1"/>
</dbReference>
<dbReference type="SUPFAM" id="SSF143800">
    <property type="entry name" value="L28p-like"/>
    <property type="match status" value="1"/>
</dbReference>
<protein>
    <recommendedName>
        <fullName evidence="1">Large ribosomal subunit protein bL28</fullName>
    </recommendedName>
    <alternativeName>
        <fullName evidence="2">50S ribosomal protein L28</fullName>
    </alternativeName>
</protein>
<gene>
    <name evidence="1" type="primary">rpmB</name>
    <name type="ordered locus">Pnap_3214</name>
</gene>
<sequence>MARVCQVTGKGPMVGNNVSHANNKTKRRFMPNLQYRRIWVESENRWVRLRITAAGLRLIDKNGIDAVLVDLRARGEV</sequence>
<keyword id="KW-1185">Reference proteome</keyword>
<keyword id="KW-0687">Ribonucleoprotein</keyword>
<keyword id="KW-0689">Ribosomal protein</keyword>
<comment type="similarity">
    <text evidence="1">Belongs to the bacterial ribosomal protein bL28 family.</text>
</comment>
<proteinExistence type="inferred from homology"/>
<organism>
    <name type="scientific">Polaromonas naphthalenivorans (strain CJ2)</name>
    <dbReference type="NCBI Taxonomy" id="365044"/>
    <lineage>
        <taxon>Bacteria</taxon>
        <taxon>Pseudomonadati</taxon>
        <taxon>Pseudomonadota</taxon>
        <taxon>Betaproteobacteria</taxon>
        <taxon>Burkholderiales</taxon>
        <taxon>Comamonadaceae</taxon>
        <taxon>Polaromonas</taxon>
    </lineage>
</organism>
<evidence type="ECO:0000255" key="1">
    <source>
        <dbReference type="HAMAP-Rule" id="MF_00373"/>
    </source>
</evidence>
<evidence type="ECO:0000305" key="2"/>
<name>RL28_POLNA</name>
<feature type="chain" id="PRO_1000007300" description="Large ribosomal subunit protein bL28">
    <location>
        <begin position="1"/>
        <end position="77"/>
    </location>
</feature>
<reference key="1">
    <citation type="journal article" date="2009" name="Environ. Microbiol.">
        <title>The genome of Polaromonas naphthalenivorans strain CJ2, isolated from coal tar-contaminated sediment, reveals physiological and metabolic versatility and evolution through extensive horizontal gene transfer.</title>
        <authorList>
            <person name="Yagi J.M."/>
            <person name="Sims D."/>
            <person name="Brettin T."/>
            <person name="Bruce D."/>
            <person name="Madsen E.L."/>
        </authorList>
    </citation>
    <scope>NUCLEOTIDE SEQUENCE [LARGE SCALE GENOMIC DNA]</scope>
    <source>
        <strain>CJ2</strain>
    </source>
</reference>